<name>RECC_BUCBP</name>
<sequence>MFTLYKSLKFNLFVKSAFKVILNEPLLNPLTKEIFIVNNKETEQWIKIFIAKKYKVCTNIKFFKLKHFILNILKQNTPKLYSKSEFSKYSIMWKIINIPDIQHLLTKIVSKNNTYSTLFKIASSISNLFQLYLKYRPDYIKKWEQKSNIPKTRLKQKWQQIIWMRIIKYTKDANKPILHFSNLLYDSIKKMQRNNFINTKLPVRIFIFNITPITPQYAIFLKSISKYCSVHFFYATASYNDKQMFSTSFIKFKQTQEISNNQLLSLLHSKNKNIIYHEIENFQKNTKFQSYWITYEYEQMLFLSLIKDKTINLNFKIKQNSLLQYLQNKILNLHSIQKKNNEQENNKILILKTDKSLSIHSCHTLIREIEVLHNNLLNILNDNNDILFQDVLVISKNLDTYIPYINQIFNSASSKNFIPFSINYKNIKNIEFYKTILELIDLPNIELNINKITNLLNIPTLLKKVQINEQEIPILLQIINQTEIQWENDNILSNDWLSNDITKCWEHGLQRIFLGQIINNIDYKFWENIVPYNEFSTLYYNIFNKLISLISLLNKWKKILSKPKFLSHWDITFKKLLNDFFTDHEQKQPEAKLIIKKWTEIIHSGMQEKYTKKISITLLKNELCNSVSYISQSNYLFSGKITFCNNFTLTNIPFKIIYLIGLNDNISSNTHESFDIYNLLKLHPRAYDPCDEINHKNLLLKTLLSAKKFFYISHQIVSNNYKKLNNIPIAIDKIIKYITQYFYIKNKNKDNFNDNLKDIKSHIYHNYTFYAHEKRNFLEKLNYPNFNTTIWKMATLINNSHKEFIKKLPSIKNQTINYNTLILFWKNPIQTFFHVRLNIQLNTTKNKHMHQNKHFINKLDQYKMNKTLLKFFLYKQNTNQLFQYYKNIGIIPNNNIGNIIWEYTKKLITPLYDQIMKIKKILNNSKFCINVKNKCMLHGQLKNINSSGGLLRWKATKLSFQDIISCWLEHLLYCSLYKKHNSILIGTNHQIITFYKLENKTAKYYLKKYISGYFDGMEQPILLTKSGINWINAIYDKKNNKFYTNTNKNLNAYKIFLNTWNGNNWITGEKDDPYIQKMIVYLTKKNIQKIYKTTKKWLTPILKNISYSKYH</sequence>
<accession>Q89AB4</accession>
<dbReference type="EMBL" id="AE016826">
    <property type="protein sequence ID" value="AAO27115.1"/>
    <property type="molecule type" value="Genomic_DNA"/>
</dbReference>
<dbReference type="RefSeq" id="WP_011091516.1">
    <property type="nucleotide sequence ID" value="NC_004545.1"/>
</dbReference>
<dbReference type="SMR" id="Q89AB4"/>
<dbReference type="STRING" id="224915.bbp_403"/>
<dbReference type="KEGG" id="bab:bbp_403"/>
<dbReference type="eggNOG" id="COG1330">
    <property type="taxonomic scope" value="Bacteria"/>
</dbReference>
<dbReference type="HOGENOM" id="CLU_007513_0_0_6"/>
<dbReference type="OrthoDB" id="9762834at2"/>
<dbReference type="Proteomes" id="UP000000601">
    <property type="component" value="Chromosome"/>
</dbReference>
<dbReference type="GO" id="GO:0009338">
    <property type="term" value="C:exodeoxyribonuclease V complex"/>
    <property type="evidence" value="ECO:0007669"/>
    <property type="project" value="InterPro"/>
</dbReference>
<dbReference type="GO" id="GO:0005524">
    <property type="term" value="F:ATP binding"/>
    <property type="evidence" value="ECO:0007669"/>
    <property type="project" value="UniProtKB-UniRule"/>
</dbReference>
<dbReference type="GO" id="GO:0003677">
    <property type="term" value="F:DNA binding"/>
    <property type="evidence" value="ECO:0007669"/>
    <property type="project" value="UniProtKB-UniRule"/>
</dbReference>
<dbReference type="GO" id="GO:0003678">
    <property type="term" value="F:DNA helicase activity"/>
    <property type="evidence" value="ECO:0007669"/>
    <property type="project" value="UniProtKB-UniRule"/>
</dbReference>
<dbReference type="GO" id="GO:0008854">
    <property type="term" value="F:exodeoxyribonuclease V activity"/>
    <property type="evidence" value="ECO:0007669"/>
    <property type="project" value="UniProtKB-EC"/>
</dbReference>
<dbReference type="GO" id="GO:0000724">
    <property type="term" value="P:double-strand break repair via homologous recombination"/>
    <property type="evidence" value="ECO:0007669"/>
    <property type="project" value="UniProtKB-UniRule"/>
</dbReference>
<dbReference type="CDD" id="cd22353">
    <property type="entry name" value="RecC_C-like"/>
    <property type="match status" value="1"/>
</dbReference>
<dbReference type="Gene3D" id="1.10.10.160">
    <property type="match status" value="1"/>
</dbReference>
<dbReference type="Gene3D" id="1.10.10.990">
    <property type="match status" value="1"/>
</dbReference>
<dbReference type="Gene3D" id="3.40.50.10930">
    <property type="match status" value="1"/>
</dbReference>
<dbReference type="Gene3D" id="3.40.50.300">
    <property type="entry name" value="P-loop containing nucleotide triphosphate hydrolases"/>
    <property type="match status" value="2"/>
</dbReference>
<dbReference type="HAMAP" id="MF_01486">
    <property type="entry name" value="RecC"/>
    <property type="match status" value="1"/>
</dbReference>
<dbReference type="InterPro" id="IPR013986">
    <property type="entry name" value="DExx_box_DNA_helicase_dom_sf"/>
</dbReference>
<dbReference type="InterPro" id="IPR027417">
    <property type="entry name" value="P-loop_NTPase"/>
</dbReference>
<dbReference type="InterPro" id="IPR006697">
    <property type="entry name" value="RecC"/>
</dbReference>
<dbReference type="InterPro" id="IPR041500">
    <property type="entry name" value="RecC_C"/>
</dbReference>
<dbReference type="InterPro" id="IPR011335">
    <property type="entry name" value="Restrct_endonuc-II-like"/>
</dbReference>
<dbReference type="PANTHER" id="PTHR30591">
    <property type="entry name" value="RECBCD ENZYME SUBUNIT RECC"/>
    <property type="match status" value="1"/>
</dbReference>
<dbReference type="PANTHER" id="PTHR30591:SF1">
    <property type="entry name" value="RECBCD ENZYME SUBUNIT RECC"/>
    <property type="match status" value="1"/>
</dbReference>
<dbReference type="Pfam" id="PF04257">
    <property type="entry name" value="Exonuc_V_gamma"/>
    <property type="match status" value="1"/>
</dbReference>
<dbReference type="Pfam" id="PF17946">
    <property type="entry name" value="RecC_C"/>
    <property type="match status" value="1"/>
</dbReference>
<dbReference type="PIRSF" id="PIRSF000980">
    <property type="entry name" value="RecC"/>
    <property type="match status" value="1"/>
</dbReference>
<dbReference type="SUPFAM" id="SSF52540">
    <property type="entry name" value="P-loop containing nucleoside triphosphate hydrolases"/>
    <property type="match status" value="2"/>
</dbReference>
<dbReference type="SUPFAM" id="SSF52980">
    <property type="entry name" value="Restriction endonuclease-like"/>
    <property type="match status" value="1"/>
</dbReference>
<gene>
    <name evidence="1" type="primary">recC</name>
    <name type="ordered locus">bbp_403</name>
</gene>
<feature type="chain" id="PRO_0000087119" description="RecBCD enzyme subunit RecC">
    <location>
        <begin position="1"/>
        <end position="1111"/>
    </location>
</feature>
<evidence type="ECO:0000255" key="1">
    <source>
        <dbReference type="HAMAP-Rule" id="MF_01486"/>
    </source>
</evidence>
<reference key="1">
    <citation type="journal article" date="2003" name="Proc. Natl. Acad. Sci. U.S.A.">
        <title>Reductive genome evolution in Buchnera aphidicola.</title>
        <authorList>
            <person name="van Ham R.C.H.J."/>
            <person name="Kamerbeek J."/>
            <person name="Palacios C."/>
            <person name="Rausell C."/>
            <person name="Abascal F."/>
            <person name="Bastolla U."/>
            <person name="Fernandez J.M."/>
            <person name="Jimenez L."/>
            <person name="Postigo M."/>
            <person name="Silva F.J."/>
            <person name="Tamames J."/>
            <person name="Viguera E."/>
            <person name="Latorre A."/>
            <person name="Valencia A."/>
            <person name="Moran F."/>
            <person name="Moya A."/>
        </authorList>
    </citation>
    <scope>NUCLEOTIDE SEQUENCE [LARGE SCALE GENOMIC DNA]</scope>
    <source>
        <strain>Bp</strain>
    </source>
</reference>
<proteinExistence type="inferred from homology"/>
<protein>
    <recommendedName>
        <fullName evidence="1">RecBCD enzyme subunit RecC</fullName>
    </recommendedName>
    <alternativeName>
        <fullName evidence="1">Exonuclease V subunit RecC</fullName>
        <shortName evidence="1">ExoV subunit RecC</shortName>
    </alternativeName>
    <alternativeName>
        <fullName evidence="1">Helicase/nuclease RecBCD subunit RecC</fullName>
    </alternativeName>
</protein>
<keyword id="KW-0067">ATP-binding</keyword>
<keyword id="KW-0227">DNA damage</keyword>
<keyword id="KW-0234">DNA repair</keyword>
<keyword id="KW-0238">DNA-binding</keyword>
<keyword id="KW-0269">Exonuclease</keyword>
<keyword id="KW-0347">Helicase</keyword>
<keyword id="KW-0378">Hydrolase</keyword>
<keyword id="KW-0540">Nuclease</keyword>
<keyword id="KW-0547">Nucleotide-binding</keyword>
<keyword id="KW-1185">Reference proteome</keyword>
<comment type="function">
    <text evidence="1">A helicase/nuclease that prepares dsDNA breaks (DSB) for recombinational DNA repair. Binds to DSBs and unwinds DNA via a highly rapid and processive ATP-dependent bidirectional helicase activity. Unwinds dsDNA until it encounters a Chi (crossover hotspot instigator) sequence from the 3' direction. Cuts ssDNA a few nucleotides 3' to the Chi site. The properties and activities of the enzyme are changed at Chi. The Chi-altered holoenzyme produces a long 3'-ssDNA overhang and facilitates RecA-binding to the ssDNA for homologous DNA recombination and repair. Holoenzyme degrades any linearized DNA that is unable to undergo homologous recombination. In the holoenzyme this subunit recognizes the wild-type Chi sequence, and when added to isolated RecB increases its ATP-dependent helicase processivity.</text>
</comment>
<comment type="subunit">
    <text evidence="1">Heterotrimer of RecB, RecC and RecD. All subunits contribute to DNA-binding.</text>
</comment>
<comment type="miscellaneous">
    <text evidence="1">In the RecBCD complex, RecB has a slow 3'-5' helicase, an exonuclease activity and loads RecA onto ssDNA, RecD has a fast 5'-3' helicase activity, while RecC stimulates the ATPase and processivity of the RecB helicase and contributes to recognition of the Chi site.</text>
</comment>
<comment type="similarity">
    <text evidence="1">Belongs to the RecC family.</text>
</comment>
<organism>
    <name type="scientific">Buchnera aphidicola subsp. Baizongia pistaciae (strain Bp)</name>
    <dbReference type="NCBI Taxonomy" id="224915"/>
    <lineage>
        <taxon>Bacteria</taxon>
        <taxon>Pseudomonadati</taxon>
        <taxon>Pseudomonadota</taxon>
        <taxon>Gammaproteobacteria</taxon>
        <taxon>Enterobacterales</taxon>
        <taxon>Erwiniaceae</taxon>
        <taxon>Buchnera</taxon>
    </lineage>
</organism>